<accession>Q5FWV6</accession>
<comment type="function">
    <text evidence="2">Multifunctional protein involved in mechanosensation, and plays an essential role in lipid metabolism (By similarity). May function as a potential ion channel involved in sensing mechanical stimuli. TMEM120A is structurally similar to a lipid-modifying enzyme, ELOVL7, and contains a bound coenzyme A molecule, which suggests it might function as an enzyme in lipid metabolism (By similarity).</text>
</comment>
<comment type="subunit">
    <text evidence="2">Homodimer.</text>
</comment>
<comment type="subcellular location">
    <subcellularLocation>
        <location evidence="2">Cell membrane</location>
        <topology evidence="2">Multi-pass membrane protein</topology>
    </subcellularLocation>
    <subcellularLocation>
        <location evidence="1">Nucleus inner membrane</location>
        <topology evidence="2">Multi-pass membrane protein</topology>
    </subcellularLocation>
    <subcellularLocation>
        <location evidence="2">Endoplasmic reticulum</location>
    </subcellularLocation>
</comment>
<comment type="domain">
    <text evidence="2">The transmembrane domain (TMD) has structural homology to the very long chain fatty acid elongase 7, ELOVL7, despite low sequence homology between them.</text>
</comment>
<comment type="similarity">
    <text evidence="3">Belongs to the TMEM120 family.</text>
</comment>
<comment type="caution">
    <text evidence="1 2 3">Whether TMEM120S functions as a mechanosensitive ion channel is controversial (By similarity). Its structural homology to ELOVL7, leads to suggest than TMEM120A may function as an enzyme involved in fatty acid metabolism, although its enzymatic activity and its potential substrates remain unknown (By similarity). Whether TMEM120A is an enzyme rather than an ion channel is still under debate.</text>
</comment>
<protein>
    <recommendedName>
        <fullName evidence="3">Transmembrane protein 120A</fullName>
    </recommendedName>
    <alternativeName>
        <fullName evidence="1">Ion channel TACAN</fullName>
    </alternativeName>
</protein>
<sequence>MNSPALQDCVRDWGELQENYQDIQETHRLYKQKLEELAKLQTRCSGTIARQKKKLKELSVELKKYKSSVKNVEEEEEQISVLNNQIRIREKTFFEMESFLPKKNGLYLSLVLGNVNVTLLSKQSKFAYKDEYEKFKLYLTMILMVLSFICRFVLNSRVTDAVFNFLLVWYYCTLTIRESILINNGSRIKGWWVLNHYISTFLSGVMLTWPDGLMYQMFRNQFLSFSMYQSFVQFLQYYYQSGCLYRLRALGERHNMDLTVEGFQSWMWRGLTFLLPFLFFGQFWQLYNAITLFKLARHPECKEWQVIMCGLPFLVHFLGNFFTTLRVVHQKFQKQN</sequence>
<proteinExistence type="evidence at transcript level"/>
<name>TACAN_XENTR</name>
<dbReference type="EMBL" id="BC089189">
    <property type="protein sequence ID" value="AAH89189.1"/>
    <property type="molecule type" value="mRNA"/>
</dbReference>
<dbReference type="EMBL" id="BC153698">
    <property type="status" value="NOT_ANNOTATED_CDS"/>
    <property type="molecule type" value="mRNA"/>
</dbReference>
<dbReference type="RefSeq" id="NP_001107682.1">
    <property type="nucleotide sequence ID" value="NM_001114210.1"/>
</dbReference>
<dbReference type="SMR" id="Q5FWV6"/>
<dbReference type="FunCoup" id="Q5FWV6">
    <property type="interactions" value="381"/>
</dbReference>
<dbReference type="STRING" id="8364.ENSXETP00000028784"/>
<dbReference type="PaxDb" id="8364-ENSXETP00000019687"/>
<dbReference type="DNASU" id="548366"/>
<dbReference type="GeneID" id="548366"/>
<dbReference type="KEGG" id="xtr:548366"/>
<dbReference type="AGR" id="Xenbase:XB-GENE-5858565"/>
<dbReference type="CTD" id="83862"/>
<dbReference type="Xenbase" id="XB-GENE-5858565">
    <property type="gene designation" value="tmem120a"/>
</dbReference>
<dbReference type="eggNOG" id="KOG4758">
    <property type="taxonomic scope" value="Eukaryota"/>
</dbReference>
<dbReference type="HOGENOM" id="CLU_048749_1_1_1"/>
<dbReference type="InParanoid" id="Q5FWV6"/>
<dbReference type="OMA" id="DRYRYKQ"/>
<dbReference type="OrthoDB" id="2015098at2759"/>
<dbReference type="PhylomeDB" id="Q5FWV6"/>
<dbReference type="TreeFam" id="TF313552"/>
<dbReference type="Proteomes" id="UP000008143">
    <property type="component" value="Chromosome 2"/>
</dbReference>
<dbReference type="Bgee" id="ENSXETG00000008980">
    <property type="expression patterns" value="Expressed in mesonephros and 12 other cell types or tissues"/>
</dbReference>
<dbReference type="ExpressionAtlas" id="Q5FWV6">
    <property type="expression patterns" value="differential"/>
</dbReference>
<dbReference type="GO" id="GO:0005783">
    <property type="term" value="C:endoplasmic reticulum"/>
    <property type="evidence" value="ECO:0007669"/>
    <property type="project" value="UniProtKB-SubCell"/>
</dbReference>
<dbReference type="GO" id="GO:0005637">
    <property type="term" value="C:nuclear inner membrane"/>
    <property type="evidence" value="ECO:0007669"/>
    <property type="project" value="UniProtKB-SubCell"/>
</dbReference>
<dbReference type="GO" id="GO:0005886">
    <property type="term" value="C:plasma membrane"/>
    <property type="evidence" value="ECO:0000250"/>
    <property type="project" value="UniProtKB"/>
</dbReference>
<dbReference type="GO" id="GO:0120225">
    <property type="term" value="F:coenzyme A binding"/>
    <property type="evidence" value="ECO:0000250"/>
    <property type="project" value="UniProtKB"/>
</dbReference>
<dbReference type="GO" id="GO:0005216">
    <property type="term" value="F:monoatomic ion channel activity"/>
    <property type="evidence" value="ECO:0000250"/>
    <property type="project" value="UniProtKB"/>
</dbReference>
<dbReference type="GO" id="GO:0050966">
    <property type="term" value="P:detection of mechanical stimulus involved in sensory perception of pain"/>
    <property type="evidence" value="ECO:0000250"/>
    <property type="project" value="UniProtKB"/>
</dbReference>
<dbReference type="GO" id="GO:0034220">
    <property type="term" value="P:monoatomic ion transmembrane transport"/>
    <property type="evidence" value="ECO:0000250"/>
    <property type="project" value="UniProtKB"/>
</dbReference>
<dbReference type="InterPro" id="IPR012926">
    <property type="entry name" value="TMEM120A/B"/>
</dbReference>
<dbReference type="PANTHER" id="PTHR21433:SF1">
    <property type="entry name" value="ION CHANNEL TACAN"/>
    <property type="match status" value="1"/>
</dbReference>
<dbReference type="PANTHER" id="PTHR21433">
    <property type="entry name" value="TRANSMEMBRANE PROTEIN INDUCED BY TUMOR NECROSIS FACTOR ALPHA"/>
    <property type="match status" value="1"/>
</dbReference>
<dbReference type="Pfam" id="PF07851">
    <property type="entry name" value="TMEM120A-B"/>
    <property type="match status" value="1"/>
</dbReference>
<keyword id="KW-1003">Cell membrane</keyword>
<keyword id="KW-0256">Endoplasmic reticulum</keyword>
<keyword id="KW-0472">Membrane</keyword>
<keyword id="KW-0539">Nucleus</keyword>
<keyword id="KW-1185">Reference proteome</keyword>
<keyword id="KW-0812">Transmembrane</keyword>
<keyword id="KW-1133">Transmembrane helix</keyword>
<evidence type="ECO:0000250" key="1">
    <source>
        <dbReference type="UniProtKB" id="Q8C1E7"/>
    </source>
</evidence>
<evidence type="ECO:0000250" key="2">
    <source>
        <dbReference type="UniProtKB" id="Q9BXJ8"/>
    </source>
</evidence>
<evidence type="ECO:0000305" key="3"/>
<reference key="1">
    <citation type="submission" date="2005-01" db="EMBL/GenBank/DDBJ databases">
        <authorList>
            <consortium name="NIH - Xenopus Gene Collection (XGC) project"/>
        </authorList>
    </citation>
    <scope>NUCLEOTIDE SEQUENCE [LARGE SCALE MRNA]</scope>
    <source>
        <tissue>Spleen</tissue>
    </source>
</reference>
<gene>
    <name evidence="1" type="primary">tmem120a</name>
</gene>
<feature type="chain" id="PRO_0000309343" description="Transmembrane protein 120A">
    <location>
        <begin position="1"/>
        <end position="336"/>
    </location>
</feature>
<feature type="topological domain" description="Cytoplasmic" evidence="3">
    <location>
        <begin position="1"/>
        <end position="131"/>
    </location>
</feature>
<feature type="transmembrane region" description="Helical; Name=1" evidence="2">
    <location>
        <begin position="132"/>
        <end position="151"/>
    </location>
</feature>
<feature type="topological domain" description="Extracellular" evidence="3">
    <location>
        <begin position="152"/>
        <end position="157"/>
    </location>
</feature>
<feature type="transmembrane region" description="Helical; Name=2" evidence="2">
    <location>
        <begin position="158"/>
        <end position="176"/>
    </location>
</feature>
<feature type="topological domain" description="Cytoplasmic" evidence="3">
    <location>
        <begin position="177"/>
        <end position="189"/>
    </location>
</feature>
<feature type="transmembrane region" description="Helical; Name=3" evidence="2">
    <location>
        <begin position="190"/>
        <end position="208"/>
    </location>
</feature>
<feature type="topological domain" description="Extracellular" evidence="3">
    <location>
        <begin position="209"/>
        <end position="217"/>
    </location>
</feature>
<feature type="transmembrane region" description="Helical; Name=4" evidence="2">
    <location>
        <begin position="218"/>
        <end position="239"/>
    </location>
</feature>
<feature type="topological domain" description="Cytoplasmic" evidence="3">
    <location>
        <begin position="240"/>
        <end position="269"/>
    </location>
</feature>
<feature type="transmembrane region" description="Helical; Name=5" evidence="2">
    <location>
        <begin position="270"/>
        <end position="293"/>
    </location>
</feature>
<feature type="topological domain" description="Extracellular" evidence="3">
    <location>
        <begin position="294"/>
        <end position="303"/>
    </location>
</feature>
<feature type="transmembrane region" description="Helical; Name=6" evidence="2">
    <location>
        <begin position="304"/>
        <end position="329"/>
    </location>
</feature>
<feature type="topological domain" description="Cytoplasmic" evidence="3">
    <location>
        <begin position="330"/>
        <end position="336"/>
    </location>
</feature>
<feature type="binding site" evidence="2">
    <location>
        <position position="129"/>
    </location>
    <ligand>
        <name>CoA</name>
        <dbReference type="ChEBI" id="CHEBI:57287"/>
    </ligand>
</feature>
<feature type="binding site" evidence="2">
    <location>
        <position position="186"/>
    </location>
    <ligand>
        <name>CoA</name>
        <dbReference type="ChEBI" id="CHEBI:57287"/>
    </ligand>
</feature>
<feature type="binding site" evidence="2">
    <location>
        <position position="187"/>
    </location>
    <ligand>
        <name>CoA</name>
        <dbReference type="ChEBI" id="CHEBI:57287"/>
    </ligand>
</feature>
<feature type="binding site" evidence="2">
    <location>
        <position position="236"/>
    </location>
    <ligand>
        <name>CoA</name>
        <dbReference type="ChEBI" id="CHEBI:57287"/>
    </ligand>
</feature>
<feature type="binding site" evidence="2">
    <location>
        <position position="239"/>
    </location>
    <ligand>
        <name>CoA</name>
        <dbReference type="ChEBI" id="CHEBI:57287"/>
    </ligand>
</feature>
<feature type="binding site" evidence="2">
    <location>
        <position position="240"/>
    </location>
    <ligand>
        <name>CoA</name>
        <dbReference type="ChEBI" id="CHEBI:57287"/>
    </ligand>
</feature>
<feature type="binding site" evidence="2">
    <location>
        <position position="331"/>
    </location>
    <ligand>
        <name>CoA</name>
        <dbReference type="ChEBI" id="CHEBI:57287"/>
    </ligand>
</feature>
<organism>
    <name type="scientific">Xenopus tropicalis</name>
    <name type="common">Western clawed frog</name>
    <name type="synonym">Silurana tropicalis</name>
    <dbReference type="NCBI Taxonomy" id="8364"/>
    <lineage>
        <taxon>Eukaryota</taxon>
        <taxon>Metazoa</taxon>
        <taxon>Chordata</taxon>
        <taxon>Craniata</taxon>
        <taxon>Vertebrata</taxon>
        <taxon>Euteleostomi</taxon>
        <taxon>Amphibia</taxon>
        <taxon>Batrachia</taxon>
        <taxon>Anura</taxon>
        <taxon>Pipoidea</taxon>
        <taxon>Pipidae</taxon>
        <taxon>Xenopodinae</taxon>
        <taxon>Xenopus</taxon>
        <taxon>Silurana</taxon>
    </lineage>
</organism>